<sequence length="680" mass="78508">MIDRYKHQQLRIGSVSPQQISAWATKIIPNGEIVGEVTKPYTFHYKTNKPEKDGLFCERIFGPIKSGICACGNYRVIGDEKEDPKFCEQCGVEFVGSRIRRYQMGYIKLTCPVTHVWYLKRLPSYIANLLDKPLKELESLVYCDFSFARPITKKPTFLRLRGSFEYEIQSWKYSIPLFFTTQGFDIFRNREISTGAGAIREQLADLDLRIIIENSLVEWKLLGEEGPTGNEWEDRKIVRRKDFLVRRMELAKHFIRTNIEPEWMVLCLLPVLPPELRPIIQIEGGKLMSSDINELYRRVIYRNNTLTDLLTTSRSTPGELVMCQEKLVQEAVDTLLDNGIRGQPMKDGHNKVYKSFSDVIEGKEGRFRETLLGKRVDYSGRSVIVVGPSLSLHRCGLPREIAIELFQTFVIRGLIRQHLASNIGVAKSQIRENKPIVWEILQEVMQGHPVLLNRAPTLHRLGIQSFQPILVEGRTICLHPLVCKGFNADFDGDQMAVHVPLSLEAQAEARLLMFSHMNLLSPAIGDPISVPTQDMLIGLYVLTSATRRGICANRYNPCNRKNYQNERIYETNYKYMKEPFFCNSYDAIGAYWQKRINLDSPLWLRWQLDQRVSASREVPIEVHYESFGTYHEIYAHYLIVRSVKKETFCVYIRTTVGHISFYREIEEAIQGFSQACSYDT</sequence>
<proteinExistence type="inferred from homology"/>
<organism>
    <name type="scientific">Aethionema grandiflorum</name>
    <name type="common">Persian stone-cress</name>
    <dbReference type="NCBI Taxonomy" id="72657"/>
    <lineage>
        <taxon>Eukaryota</taxon>
        <taxon>Viridiplantae</taxon>
        <taxon>Streptophyta</taxon>
        <taxon>Embryophyta</taxon>
        <taxon>Tracheophyta</taxon>
        <taxon>Spermatophyta</taxon>
        <taxon>Magnoliopsida</taxon>
        <taxon>eudicotyledons</taxon>
        <taxon>Gunneridae</taxon>
        <taxon>Pentapetalae</taxon>
        <taxon>rosids</taxon>
        <taxon>malvids</taxon>
        <taxon>Brassicales</taxon>
        <taxon>Brassicaceae</taxon>
        <taxon>Aethionemeae</taxon>
        <taxon>Aethionema</taxon>
    </lineage>
</organism>
<gene>
    <name evidence="1" type="primary">rpoC1</name>
</gene>
<geneLocation type="chloroplast"/>
<accession>A4QJJ0</accession>
<evidence type="ECO:0000255" key="1">
    <source>
        <dbReference type="HAMAP-Rule" id="MF_01323"/>
    </source>
</evidence>
<keyword id="KW-0150">Chloroplast</keyword>
<keyword id="KW-0240">DNA-directed RNA polymerase</keyword>
<keyword id="KW-0460">Magnesium</keyword>
<keyword id="KW-0479">Metal-binding</keyword>
<keyword id="KW-0548">Nucleotidyltransferase</keyword>
<keyword id="KW-0934">Plastid</keyword>
<keyword id="KW-0804">Transcription</keyword>
<keyword id="KW-0808">Transferase</keyword>
<keyword id="KW-0862">Zinc</keyword>
<name>RPOC1_AETGR</name>
<reference key="1">
    <citation type="submission" date="2007-03" db="EMBL/GenBank/DDBJ databases">
        <title>Sequencing analysis of Aethionema grandiflorum chloroplast DNA.</title>
        <authorList>
            <person name="Hosouchi T."/>
            <person name="Tsuruoka H."/>
            <person name="Kotani H."/>
        </authorList>
    </citation>
    <scope>NUCLEOTIDE SEQUENCE [LARGE SCALE GENOMIC DNA]</scope>
</reference>
<feature type="chain" id="PRO_0000353471" description="DNA-directed RNA polymerase subunit beta'">
    <location>
        <begin position="1"/>
        <end position="680"/>
    </location>
</feature>
<feature type="binding site" evidence="1">
    <location>
        <position position="69"/>
    </location>
    <ligand>
        <name>Zn(2+)</name>
        <dbReference type="ChEBI" id="CHEBI:29105"/>
    </ligand>
</feature>
<feature type="binding site" evidence="1">
    <location>
        <position position="71"/>
    </location>
    <ligand>
        <name>Zn(2+)</name>
        <dbReference type="ChEBI" id="CHEBI:29105"/>
    </ligand>
</feature>
<feature type="binding site" evidence="1">
    <location>
        <position position="87"/>
    </location>
    <ligand>
        <name>Zn(2+)</name>
        <dbReference type="ChEBI" id="CHEBI:29105"/>
    </ligand>
</feature>
<feature type="binding site" evidence="1">
    <location>
        <position position="90"/>
    </location>
    <ligand>
        <name>Zn(2+)</name>
        <dbReference type="ChEBI" id="CHEBI:29105"/>
    </ligand>
</feature>
<feature type="binding site" evidence="1">
    <location>
        <position position="489"/>
    </location>
    <ligand>
        <name>Mg(2+)</name>
        <dbReference type="ChEBI" id="CHEBI:18420"/>
    </ligand>
</feature>
<feature type="binding site" evidence="1">
    <location>
        <position position="491"/>
    </location>
    <ligand>
        <name>Mg(2+)</name>
        <dbReference type="ChEBI" id="CHEBI:18420"/>
    </ligand>
</feature>
<feature type="binding site" evidence="1">
    <location>
        <position position="493"/>
    </location>
    <ligand>
        <name>Mg(2+)</name>
        <dbReference type="ChEBI" id="CHEBI:18420"/>
    </ligand>
</feature>
<comment type="function">
    <text evidence="1">DNA-dependent RNA polymerase catalyzes the transcription of DNA into RNA using the four ribonucleoside triphosphates as substrates.</text>
</comment>
<comment type="catalytic activity">
    <reaction evidence="1">
        <text>RNA(n) + a ribonucleoside 5'-triphosphate = RNA(n+1) + diphosphate</text>
        <dbReference type="Rhea" id="RHEA:21248"/>
        <dbReference type="Rhea" id="RHEA-COMP:14527"/>
        <dbReference type="Rhea" id="RHEA-COMP:17342"/>
        <dbReference type="ChEBI" id="CHEBI:33019"/>
        <dbReference type="ChEBI" id="CHEBI:61557"/>
        <dbReference type="ChEBI" id="CHEBI:140395"/>
        <dbReference type="EC" id="2.7.7.6"/>
    </reaction>
</comment>
<comment type="cofactor">
    <cofactor evidence="1">
        <name>Mg(2+)</name>
        <dbReference type="ChEBI" id="CHEBI:18420"/>
    </cofactor>
    <text evidence="1">Binds 1 Mg(2+) ion per subunit.</text>
</comment>
<comment type="cofactor">
    <cofactor evidence="1">
        <name>Zn(2+)</name>
        <dbReference type="ChEBI" id="CHEBI:29105"/>
    </cofactor>
    <text evidence="1">Binds 1 Zn(2+) ion per subunit.</text>
</comment>
<comment type="subunit">
    <text evidence="1">In plastids the minimal PEP RNA polymerase catalytic core is composed of four subunits: alpha, beta, beta', and beta''. When a (nuclear-encoded) sigma factor is associated with the core the holoenzyme is formed, which can initiate transcription.</text>
</comment>
<comment type="subcellular location">
    <subcellularLocation>
        <location evidence="1">Plastid</location>
        <location evidence="1">Chloroplast</location>
    </subcellularLocation>
</comment>
<comment type="similarity">
    <text evidence="1">Belongs to the RNA polymerase beta' chain family. RpoC1 subfamily.</text>
</comment>
<dbReference type="EC" id="2.7.7.6" evidence="1"/>
<dbReference type="EMBL" id="AP009367">
    <property type="protein sequence ID" value="BAF49845.1"/>
    <property type="molecule type" value="Genomic_DNA"/>
</dbReference>
<dbReference type="RefSeq" id="YP_001123021.1">
    <property type="nucleotide sequence ID" value="NC_009266.1"/>
</dbReference>
<dbReference type="SMR" id="A4QJJ0"/>
<dbReference type="GeneID" id="4962264"/>
<dbReference type="GO" id="GO:0009507">
    <property type="term" value="C:chloroplast"/>
    <property type="evidence" value="ECO:0007669"/>
    <property type="project" value="UniProtKB-SubCell"/>
</dbReference>
<dbReference type="GO" id="GO:0000428">
    <property type="term" value="C:DNA-directed RNA polymerase complex"/>
    <property type="evidence" value="ECO:0007669"/>
    <property type="project" value="UniProtKB-KW"/>
</dbReference>
<dbReference type="GO" id="GO:0005739">
    <property type="term" value="C:mitochondrion"/>
    <property type="evidence" value="ECO:0007669"/>
    <property type="project" value="GOC"/>
</dbReference>
<dbReference type="GO" id="GO:0003677">
    <property type="term" value="F:DNA binding"/>
    <property type="evidence" value="ECO:0007669"/>
    <property type="project" value="UniProtKB-UniRule"/>
</dbReference>
<dbReference type="GO" id="GO:0003899">
    <property type="term" value="F:DNA-directed RNA polymerase activity"/>
    <property type="evidence" value="ECO:0007669"/>
    <property type="project" value="UniProtKB-UniRule"/>
</dbReference>
<dbReference type="GO" id="GO:0000287">
    <property type="term" value="F:magnesium ion binding"/>
    <property type="evidence" value="ECO:0007669"/>
    <property type="project" value="UniProtKB-UniRule"/>
</dbReference>
<dbReference type="GO" id="GO:0008270">
    <property type="term" value="F:zinc ion binding"/>
    <property type="evidence" value="ECO:0007669"/>
    <property type="project" value="UniProtKB-UniRule"/>
</dbReference>
<dbReference type="GO" id="GO:0006351">
    <property type="term" value="P:DNA-templated transcription"/>
    <property type="evidence" value="ECO:0007669"/>
    <property type="project" value="UniProtKB-UniRule"/>
</dbReference>
<dbReference type="FunFam" id="4.10.860.120:FF:000007">
    <property type="entry name" value="DNA-directed RNA polymerase subunit gamma"/>
    <property type="match status" value="1"/>
</dbReference>
<dbReference type="Gene3D" id="1.10.40.90">
    <property type="match status" value="1"/>
</dbReference>
<dbReference type="Gene3D" id="2.40.40.20">
    <property type="match status" value="1"/>
</dbReference>
<dbReference type="Gene3D" id="4.10.860.120">
    <property type="entry name" value="RNA polymerase II, clamp domain"/>
    <property type="match status" value="1"/>
</dbReference>
<dbReference type="Gene3D" id="1.10.274.100">
    <property type="entry name" value="RNA polymerase Rpb1, domain 3"/>
    <property type="match status" value="1"/>
</dbReference>
<dbReference type="HAMAP" id="MF_01323">
    <property type="entry name" value="RNApol_bact_RpoC1"/>
    <property type="match status" value="1"/>
</dbReference>
<dbReference type="InterPro" id="IPR045867">
    <property type="entry name" value="DNA-dir_RpoC_beta_prime"/>
</dbReference>
<dbReference type="InterPro" id="IPR000722">
    <property type="entry name" value="RNA_pol_asu"/>
</dbReference>
<dbReference type="InterPro" id="IPR006592">
    <property type="entry name" value="RNA_pol_N"/>
</dbReference>
<dbReference type="InterPro" id="IPR007080">
    <property type="entry name" value="RNA_pol_Rpb1_1"/>
</dbReference>
<dbReference type="InterPro" id="IPR042102">
    <property type="entry name" value="RNA_pol_Rpb1_3_sf"/>
</dbReference>
<dbReference type="InterPro" id="IPR044893">
    <property type="entry name" value="RNA_pol_Rpb1_clamp_domain"/>
</dbReference>
<dbReference type="InterPro" id="IPR034678">
    <property type="entry name" value="RNApol_RpoC1"/>
</dbReference>
<dbReference type="PANTHER" id="PTHR19376">
    <property type="entry name" value="DNA-DIRECTED RNA POLYMERASE"/>
    <property type="match status" value="1"/>
</dbReference>
<dbReference type="PANTHER" id="PTHR19376:SF54">
    <property type="entry name" value="DNA-DIRECTED RNA POLYMERASE SUBUNIT BETA"/>
    <property type="match status" value="1"/>
</dbReference>
<dbReference type="Pfam" id="PF04997">
    <property type="entry name" value="RNA_pol_Rpb1_1"/>
    <property type="match status" value="1"/>
</dbReference>
<dbReference type="Pfam" id="PF00623">
    <property type="entry name" value="RNA_pol_Rpb1_2"/>
    <property type="match status" value="2"/>
</dbReference>
<dbReference type="SMART" id="SM00663">
    <property type="entry name" value="RPOLA_N"/>
    <property type="match status" value="1"/>
</dbReference>
<dbReference type="SUPFAM" id="SSF64484">
    <property type="entry name" value="beta and beta-prime subunits of DNA dependent RNA-polymerase"/>
    <property type="match status" value="1"/>
</dbReference>
<protein>
    <recommendedName>
        <fullName evidence="1">DNA-directed RNA polymerase subunit beta'</fullName>
        <ecNumber evidence="1">2.7.7.6</ecNumber>
    </recommendedName>
    <alternativeName>
        <fullName evidence="1">PEP</fullName>
    </alternativeName>
    <alternativeName>
        <fullName evidence="1">Plastid-encoded RNA polymerase subunit beta'</fullName>
        <shortName evidence="1">RNA polymerase subunit beta'</shortName>
    </alternativeName>
</protein>